<reference key="1">
    <citation type="submission" date="2007-11" db="EMBL/GenBank/DDBJ databases">
        <title>Genome sequencing of phylogenetically and phenotypically diverse Coxiella burnetii isolates.</title>
        <authorList>
            <person name="Seshadri R."/>
            <person name="Samuel J.E."/>
        </authorList>
    </citation>
    <scope>NUCLEOTIDE SEQUENCE [LARGE SCALE GENOMIC DNA]</scope>
    <source>
        <strain>RSA 331 / Henzerling II</strain>
    </source>
</reference>
<proteinExistence type="inferred from homology"/>
<organism>
    <name type="scientific">Coxiella burnetii (strain RSA 331 / Henzerling II)</name>
    <dbReference type="NCBI Taxonomy" id="360115"/>
    <lineage>
        <taxon>Bacteria</taxon>
        <taxon>Pseudomonadati</taxon>
        <taxon>Pseudomonadota</taxon>
        <taxon>Gammaproteobacteria</taxon>
        <taxon>Legionellales</taxon>
        <taxon>Coxiellaceae</taxon>
        <taxon>Coxiella</taxon>
    </lineage>
</organism>
<accession>A9NCY5</accession>
<feature type="chain" id="PRO_1000077416" description="Glycerol kinase">
    <location>
        <begin position="1"/>
        <end position="501"/>
    </location>
</feature>
<feature type="binding site" evidence="1">
    <location>
        <position position="12"/>
    </location>
    <ligand>
        <name>ADP</name>
        <dbReference type="ChEBI" id="CHEBI:456216"/>
    </ligand>
</feature>
<feature type="binding site" evidence="1">
    <location>
        <position position="12"/>
    </location>
    <ligand>
        <name>ATP</name>
        <dbReference type="ChEBI" id="CHEBI:30616"/>
    </ligand>
</feature>
<feature type="binding site" evidence="1">
    <location>
        <position position="12"/>
    </location>
    <ligand>
        <name>sn-glycerol 3-phosphate</name>
        <dbReference type="ChEBI" id="CHEBI:57597"/>
    </ligand>
</feature>
<feature type="binding site" evidence="1">
    <location>
        <position position="13"/>
    </location>
    <ligand>
        <name>ATP</name>
        <dbReference type="ChEBI" id="CHEBI:30616"/>
    </ligand>
</feature>
<feature type="binding site" evidence="1">
    <location>
        <position position="14"/>
    </location>
    <ligand>
        <name>ATP</name>
        <dbReference type="ChEBI" id="CHEBI:30616"/>
    </ligand>
</feature>
<feature type="binding site" evidence="1">
    <location>
        <position position="16"/>
    </location>
    <ligand>
        <name>ADP</name>
        <dbReference type="ChEBI" id="CHEBI:456216"/>
    </ligand>
</feature>
<feature type="binding site" evidence="1">
    <location>
        <position position="82"/>
    </location>
    <ligand>
        <name>glycerol</name>
        <dbReference type="ChEBI" id="CHEBI:17754"/>
    </ligand>
</feature>
<feature type="binding site" evidence="1">
    <location>
        <position position="82"/>
    </location>
    <ligand>
        <name>sn-glycerol 3-phosphate</name>
        <dbReference type="ChEBI" id="CHEBI:57597"/>
    </ligand>
</feature>
<feature type="binding site" evidence="1">
    <location>
        <position position="83"/>
    </location>
    <ligand>
        <name>glycerol</name>
        <dbReference type="ChEBI" id="CHEBI:17754"/>
    </ligand>
</feature>
<feature type="binding site" evidence="1">
    <location>
        <position position="83"/>
    </location>
    <ligand>
        <name>sn-glycerol 3-phosphate</name>
        <dbReference type="ChEBI" id="CHEBI:57597"/>
    </ligand>
</feature>
<feature type="binding site" evidence="1">
    <location>
        <position position="135"/>
    </location>
    <ligand>
        <name>glycerol</name>
        <dbReference type="ChEBI" id="CHEBI:17754"/>
    </ligand>
</feature>
<feature type="binding site" evidence="1">
    <location>
        <position position="135"/>
    </location>
    <ligand>
        <name>sn-glycerol 3-phosphate</name>
        <dbReference type="ChEBI" id="CHEBI:57597"/>
    </ligand>
</feature>
<feature type="binding site" evidence="1">
    <location>
        <position position="244"/>
    </location>
    <ligand>
        <name>glycerol</name>
        <dbReference type="ChEBI" id="CHEBI:17754"/>
    </ligand>
</feature>
<feature type="binding site" evidence="1">
    <location>
        <position position="244"/>
    </location>
    <ligand>
        <name>sn-glycerol 3-phosphate</name>
        <dbReference type="ChEBI" id="CHEBI:57597"/>
    </ligand>
</feature>
<feature type="binding site" evidence="1">
    <location>
        <position position="245"/>
    </location>
    <ligand>
        <name>glycerol</name>
        <dbReference type="ChEBI" id="CHEBI:17754"/>
    </ligand>
</feature>
<feature type="binding site" evidence="1">
    <location>
        <position position="266"/>
    </location>
    <ligand>
        <name>ADP</name>
        <dbReference type="ChEBI" id="CHEBI:456216"/>
    </ligand>
</feature>
<feature type="binding site" evidence="1">
    <location>
        <position position="266"/>
    </location>
    <ligand>
        <name>ATP</name>
        <dbReference type="ChEBI" id="CHEBI:30616"/>
    </ligand>
</feature>
<feature type="binding site" evidence="1">
    <location>
        <position position="309"/>
    </location>
    <ligand>
        <name>ADP</name>
        <dbReference type="ChEBI" id="CHEBI:456216"/>
    </ligand>
</feature>
<feature type="binding site" evidence="1">
    <location>
        <position position="309"/>
    </location>
    <ligand>
        <name>ATP</name>
        <dbReference type="ChEBI" id="CHEBI:30616"/>
    </ligand>
</feature>
<feature type="binding site" evidence="1">
    <location>
        <position position="409"/>
    </location>
    <ligand>
        <name>ADP</name>
        <dbReference type="ChEBI" id="CHEBI:456216"/>
    </ligand>
</feature>
<feature type="binding site" evidence="1">
    <location>
        <position position="409"/>
    </location>
    <ligand>
        <name>ATP</name>
        <dbReference type="ChEBI" id="CHEBI:30616"/>
    </ligand>
</feature>
<feature type="binding site" evidence="1">
    <location>
        <position position="413"/>
    </location>
    <ligand>
        <name>ADP</name>
        <dbReference type="ChEBI" id="CHEBI:456216"/>
    </ligand>
</feature>
<comment type="function">
    <text evidence="1">Key enzyme in the regulation of glycerol uptake and metabolism. Catalyzes the phosphorylation of glycerol to yield sn-glycerol 3-phosphate.</text>
</comment>
<comment type="catalytic activity">
    <reaction evidence="1">
        <text>glycerol + ATP = sn-glycerol 3-phosphate + ADP + H(+)</text>
        <dbReference type="Rhea" id="RHEA:21644"/>
        <dbReference type="ChEBI" id="CHEBI:15378"/>
        <dbReference type="ChEBI" id="CHEBI:17754"/>
        <dbReference type="ChEBI" id="CHEBI:30616"/>
        <dbReference type="ChEBI" id="CHEBI:57597"/>
        <dbReference type="ChEBI" id="CHEBI:456216"/>
        <dbReference type="EC" id="2.7.1.30"/>
    </reaction>
</comment>
<comment type="activity regulation">
    <text evidence="1">Inhibited by fructose 1,6-bisphosphate (FBP).</text>
</comment>
<comment type="pathway">
    <text evidence="1">Polyol metabolism; glycerol degradation via glycerol kinase pathway; sn-glycerol 3-phosphate from glycerol: step 1/1.</text>
</comment>
<comment type="similarity">
    <text evidence="1">Belongs to the FGGY kinase family.</text>
</comment>
<name>GLPK_COXBR</name>
<dbReference type="EC" id="2.7.1.30" evidence="1"/>
<dbReference type="EMBL" id="CP000890">
    <property type="protein sequence ID" value="ABX77758.1"/>
    <property type="molecule type" value="Genomic_DNA"/>
</dbReference>
<dbReference type="SMR" id="A9NCY5"/>
<dbReference type="KEGG" id="cbs:COXBURSA331_A1011"/>
<dbReference type="HOGENOM" id="CLU_009281_2_3_6"/>
<dbReference type="UniPathway" id="UPA00618">
    <property type="reaction ID" value="UER00672"/>
</dbReference>
<dbReference type="GO" id="GO:0005829">
    <property type="term" value="C:cytosol"/>
    <property type="evidence" value="ECO:0007669"/>
    <property type="project" value="TreeGrafter"/>
</dbReference>
<dbReference type="GO" id="GO:0005524">
    <property type="term" value="F:ATP binding"/>
    <property type="evidence" value="ECO:0007669"/>
    <property type="project" value="UniProtKB-UniRule"/>
</dbReference>
<dbReference type="GO" id="GO:0004370">
    <property type="term" value="F:glycerol kinase activity"/>
    <property type="evidence" value="ECO:0000250"/>
    <property type="project" value="UniProtKB"/>
</dbReference>
<dbReference type="GO" id="GO:0019563">
    <property type="term" value="P:glycerol catabolic process"/>
    <property type="evidence" value="ECO:0007669"/>
    <property type="project" value="UniProtKB-UniRule"/>
</dbReference>
<dbReference type="GO" id="GO:0006071">
    <property type="term" value="P:glycerol metabolic process"/>
    <property type="evidence" value="ECO:0000250"/>
    <property type="project" value="UniProtKB"/>
</dbReference>
<dbReference type="GO" id="GO:0006072">
    <property type="term" value="P:glycerol-3-phosphate metabolic process"/>
    <property type="evidence" value="ECO:0007669"/>
    <property type="project" value="InterPro"/>
</dbReference>
<dbReference type="CDD" id="cd07786">
    <property type="entry name" value="FGGY_EcGK_like"/>
    <property type="match status" value="1"/>
</dbReference>
<dbReference type="FunFam" id="3.30.420.40:FF:000007">
    <property type="entry name" value="Glycerol kinase"/>
    <property type="match status" value="1"/>
</dbReference>
<dbReference type="FunFam" id="3.30.420.40:FF:000177">
    <property type="entry name" value="Glycerol kinase"/>
    <property type="match status" value="1"/>
</dbReference>
<dbReference type="Gene3D" id="3.30.420.40">
    <property type="match status" value="2"/>
</dbReference>
<dbReference type="HAMAP" id="MF_00186">
    <property type="entry name" value="Glycerol_kin"/>
    <property type="match status" value="1"/>
</dbReference>
<dbReference type="InterPro" id="IPR043129">
    <property type="entry name" value="ATPase_NBD"/>
</dbReference>
<dbReference type="InterPro" id="IPR000577">
    <property type="entry name" value="Carb_kinase_FGGY"/>
</dbReference>
<dbReference type="InterPro" id="IPR018483">
    <property type="entry name" value="Carb_kinase_FGGY_CS"/>
</dbReference>
<dbReference type="InterPro" id="IPR018485">
    <property type="entry name" value="FGGY_C"/>
</dbReference>
<dbReference type="InterPro" id="IPR018484">
    <property type="entry name" value="FGGY_N"/>
</dbReference>
<dbReference type="InterPro" id="IPR005999">
    <property type="entry name" value="Glycerol_kin"/>
</dbReference>
<dbReference type="NCBIfam" id="TIGR01311">
    <property type="entry name" value="glycerol_kin"/>
    <property type="match status" value="1"/>
</dbReference>
<dbReference type="NCBIfam" id="NF000756">
    <property type="entry name" value="PRK00047.1"/>
    <property type="match status" value="1"/>
</dbReference>
<dbReference type="PANTHER" id="PTHR10196:SF78">
    <property type="entry name" value="GLYCEROL KINASE"/>
    <property type="match status" value="1"/>
</dbReference>
<dbReference type="PANTHER" id="PTHR10196">
    <property type="entry name" value="SUGAR KINASE"/>
    <property type="match status" value="1"/>
</dbReference>
<dbReference type="Pfam" id="PF02782">
    <property type="entry name" value="FGGY_C"/>
    <property type="match status" value="1"/>
</dbReference>
<dbReference type="Pfam" id="PF00370">
    <property type="entry name" value="FGGY_N"/>
    <property type="match status" value="1"/>
</dbReference>
<dbReference type="PIRSF" id="PIRSF000538">
    <property type="entry name" value="GlpK"/>
    <property type="match status" value="1"/>
</dbReference>
<dbReference type="SUPFAM" id="SSF53067">
    <property type="entry name" value="Actin-like ATPase domain"/>
    <property type="match status" value="2"/>
</dbReference>
<dbReference type="PROSITE" id="PS00933">
    <property type="entry name" value="FGGY_KINASES_1"/>
    <property type="match status" value="1"/>
</dbReference>
<dbReference type="PROSITE" id="PS00445">
    <property type="entry name" value="FGGY_KINASES_2"/>
    <property type="match status" value="1"/>
</dbReference>
<evidence type="ECO:0000255" key="1">
    <source>
        <dbReference type="HAMAP-Rule" id="MF_00186"/>
    </source>
</evidence>
<gene>
    <name evidence="1" type="primary">glpK</name>
    <name type="ordered locus">COXBURSA331_A1011</name>
</gene>
<keyword id="KW-0067">ATP-binding</keyword>
<keyword id="KW-0319">Glycerol metabolism</keyword>
<keyword id="KW-0418">Kinase</keyword>
<keyword id="KW-0547">Nucleotide-binding</keyword>
<keyword id="KW-0808">Transferase</keyword>
<sequence length="501" mass="55359">MSSFILAIDQGTTSTRAILFNEEAKLVHYHHVEITQYFPQGGWVEHDPEEIWDSTLLCCRNVLEEASLRAADIAALGISNQRETTILWDRHTGQPLYRAIGWQDRRTVNFCEQLASQAGVLAKFVEKTGLILDPYFSCSKIKWILDNIKGAYEKAKRGELAFGTVDSYLLWKFTGGKCHATDATNASRTGLFNINQQRWDDELLTLFDIPKSLLPTVLDNCAQFGFTDLDLLGHKIPITAMIGDQQAAAVGQACIKPGMVKSTYGTGCFMLLNTGDQIIHSRNRLLATIAYRLNDTVTYGLEGSIFIAGAAVKWLRDPLHLIEKANDSESMASSVEDTGGVYLVPAFTGLGAPYWDPNARGALFGLTRNTQREHIVRAALEAVCYQSKDLVRAILNDGANLTTLRVDGGMAANNWLLQFLSDILGVNVDRSRCIESSALGTAFLAGLGAGLFDSLEEMTGLWQADRHFIPQMDPKKQEELYDGWQKAVEKTLTPAAPLLFP</sequence>
<protein>
    <recommendedName>
        <fullName evidence="1">Glycerol kinase</fullName>
        <ecNumber evidence="1">2.7.1.30</ecNumber>
    </recommendedName>
    <alternativeName>
        <fullName evidence="1">ATP:glycerol 3-phosphotransferase</fullName>
    </alternativeName>
    <alternativeName>
        <fullName evidence="1">Glycerokinase</fullName>
        <shortName evidence="1">GK</shortName>
    </alternativeName>
</protein>